<gene>
    <name evidence="1" type="primary">rplF</name>
    <name type="ordered locus">Desal_1200</name>
</gene>
<evidence type="ECO:0000255" key="1">
    <source>
        <dbReference type="HAMAP-Rule" id="MF_01365"/>
    </source>
</evidence>
<evidence type="ECO:0000305" key="2"/>
<organism>
    <name type="scientific">Maridesulfovibrio salexigens (strain ATCC 14822 / DSM 2638 / NCIMB 8403 / VKM B-1763)</name>
    <name type="common">Desulfovibrio salexigens</name>
    <dbReference type="NCBI Taxonomy" id="526222"/>
    <lineage>
        <taxon>Bacteria</taxon>
        <taxon>Pseudomonadati</taxon>
        <taxon>Thermodesulfobacteriota</taxon>
        <taxon>Desulfovibrionia</taxon>
        <taxon>Desulfovibrionales</taxon>
        <taxon>Desulfovibrionaceae</taxon>
        <taxon>Maridesulfovibrio</taxon>
    </lineage>
</organism>
<keyword id="KW-1185">Reference proteome</keyword>
<keyword id="KW-0687">Ribonucleoprotein</keyword>
<keyword id="KW-0689">Ribosomal protein</keyword>
<keyword id="KW-0694">RNA-binding</keyword>
<keyword id="KW-0699">rRNA-binding</keyword>
<dbReference type="EMBL" id="CP001649">
    <property type="protein sequence ID" value="ACS79263.1"/>
    <property type="molecule type" value="Genomic_DNA"/>
</dbReference>
<dbReference type="RefSeq" id="WP_015851081.1">
    <property type="nucleotide sequence ID" value="NC_012881.1"/>
</dbReference>
<dbReference type="SMR" id="C6C1A0"/>
<dbReference type="STRING" id="526222.Desal_1200"/>
<dbReference type="KEGG" id="dsa:Desal_1200"/>
<dbReference type="eggNOG" id="COG0097">
    <property type="taxonomic scope" value="Bacteria"/>
</dbReference>
<dbReference type="HOGENOM" id="CLU_065464_1_2_7"/>
<dbReference type="OrthoDB" id="9805007at2"/>
<dbReference type="Proteomes" id="UP000002601">
    <property type="component" value="Chromosome"/>
</dbReference>
<dbReference type="GO" id="GO:0022625">
    <property type="term" value="C:cytosolic large ribosomal subunit"/>
    <property type="evidence" value="ECO:0007669"/>
    <property type="project" value="TreeGrafter"/>
</dbReference>
<dbReference type="GO" id="GO:0019843">
    <property type="term" value="F:rRNA binding"/>
    <property type="evidence" value="ECO:0007669"/>
    <property type="project" value="UniProtKB-UniRule"/>
</dbReference>
<dbReference type="GO" id="GO:0003735">
    <property type="term" value="F:structural constituent of ribosome"/>
    <property type="evidence" value="ECO:0007669"/>
    <property type="project" value="InterPro"/>
</dbReference>
<dbReference type="GO" id="GO:0002181">
    <property type="term" value="P:cytoplasmic translation"/>
    <property type="evidence" value="ECO:0007669"/>
    <property type="project" value="TreeGrafter"/>
</dbReference>
<dbReference type="FunFam" id="3.90.930.12:FF:000001">
    <property type="entry name" value="50S ribosomal protein L6"/>
    <property type="match status" value="1"/>
</dbReference>
<dbReference type="FunFam" id="3.90.930.12:FF:000002">
    <property type="entry name" value="50S ribosomal protein L6"/>
    <property type="match status" value="1"/>
</dbReference>
<dbReference type="Gene3D" id="3.90.930.12">
    <property type="entry name" value="Ribosomal protein L6, alpha-beta domain"/>
    <property type="match status" value="2"/>
</dbReference>
<dbReference type="HAMAP" id="MF_01365_B">
    <property type="entry name" value="Ribosomal_uL6_B"/>
    <property type="match status" value="1"/>
</dbReference>
<dbReference type="InterPro" id="IPR000702">
    <property type="entry name" value="Ribosomal_uL6-like"/>
</dbReference>
<dbReference type="InterPro" id="IPR036789">
    <property type="entry name" value="Ribosomal_uL6-like_a/b-dom_sf"/>
</dbReference>
<dbReference type="InterPro" id="IPR020040">
    <property type="entry name" value="Ribosomal_uL6_a/b-dom"/>
</dbReference>
<dbReference type="InterPro" id="IPR019906">
    <property type="entry name" value="Ribosomal_uL6_bac-type"/>
</dbReference>
<dbReference type="InterPro" id="IPR002358">
    <property type="entry name" value="Ribosomal_uL6_CS"/>
</dbReference>
<dbReference type="NCBIfam" id="TIGR03654">
    <property type="entry name" value="L6_bact"/>
    <property type="match status" value="1"/>
</dbReference>
<dbReference type="PANTHER" id="PTHR11655">
    <property type="entry name" value="60S/50S RIBOSOMAL PROTEIN L6/L9"/>
    <property type="match status" value="1"/>
</dbReference>
<dbReference type="PANTHER" id="PTHR11655:SF14">
    <property type="entry name" value="LARGE RIBOSOMAL SUBUNIT PROTEIN UL6M"/>
    <property type="match status" value="1"/>
</dbReference>
<dbReference type="Pfam" id="PF00347">
    <property type="entry name" value="Ribosomal_L6"/>
    <property type="match status" value="2"/>
</dbReference>
<dbReference type="PIRSF" id="PIRSF002162">
    <property type="entry name" value="Ribosomal_L6"/>
    <property type="match status" value="1"/>
</dbReference>
<dbReference type="PRINTS" id="PR00059">
    <property type="entry name" value="RIBOSOMALL6"/>
</dbReference>
<dbReference type="SUPFAM" id="SSF56053">
    <property type="entry name" value="Ribosomal protein L6"/>
    <property type="match status" value="2"/>
</dbReference>
<dbReference type="PROSITE" id="PS00525">
    <property type="entry name" value="RIBOSOMAL_L6_1"/>
    <property type="match status" value="1"/>
</dbReference>
<feature type="chain" id="PRO_1000214922" description="Large ribosomal subunit protein uL6">
    <location>
        <begin position="1"/>
        <end position="178"/>
    </location>
</feature>
<reference key="1">
    <citation type="submission" date="2009-06" db="EMBL/GenBank/DDBJ databases">
        <title>Complete sequence of Desulfovibrio salexigens DSM 2638.</title>
        <authorList>
            <consortium name="US DOE Joint Genome Institute"/>
            <person name="Lucas S."/>
            <person name="Copeland A."/>
            <person name="Lapidus A."/>
            <person name="Glavina del Rio T."/>
            <person name="Tice H."/>
            <person name="Bruce D."/>
            <person name="Goodwin L."/>
            <person name="Pitluck S."/>
            <person name="Munk A.C."/>
            <person name="Brettin T."/>
            <person name="Detter J.C."/>
            <person name="Han C."/>
            <person name="Tapia R."/>
            <person name="Larimer F."/>
            <person name="Land M."/>
            <person name="Hauser L."/>
            <person name="Kyrpides N."/>
            <person name="Anderson I."/>
            <person name="Wall J.D."/>
            <person name="Arkin A.P."/>
            <person name="Dehal P."/>
            <person name="Chivian D."/>
            <person name="Giles B."/>
            <person name="Hazen T.C."/>
        </authorList>
    </citation>
    <scope>NUCLEOTIDE SEQUENCE [LARGE SCALE GENOMIC DNA]</scope>
    <source>
        <strain>ATCC 14822 / DSM 2638 / NCIMB 8403 / VKM B-1763</strain>
    </source>
</reference>
<protein>
    <recommendedName>
        <fullName evidence="1">Large ribosomal subunit protein uL6</fullName>
    </recommendedName>
    <alternativeName>
        <fullName evidence="2">50S ribosomal protein L6</fullName>
    </alternativeName>
</protein>
<name>RL6_MARSD</name>
<accession>C6C1A0</accession>
<sequence length="178" mass="18980">MSRIGKKPIDIPSGVEVTVGADVVSVKGPKGTITTPVHPMVSFTVADNAVEVKRSGDSRQERAQHGLHRSLLANCIEGVSKGFSKTLEVVGVGYKVNVQGKNIVLNVGFSHPVNYELPAGIEASAEGNTKLTISGVDKQLVGEVAAQLRRVRPPEPYKGKGIKYIDEQIRRKAGKSGK</sequence>
<proteinExistence type="inferred from homology"/>
<comment type="function">
    <text evidence="1">This protein binds to the 23S rRNA, and is important in its secondary structure. It is located near the subunit interface in the base of the L7/L12 stalk, and near the tRNA binding site of the peptidyltransferase center.</text>
</comment>
<comment type="subunit">
    <text evidence="1">Part of the 50S ribosomal subunit.</text>
</comment>
<comment type="similarity">
    <text evidence="1">Belongs to the universal ribosomal protein uL6 family.</text>
</comment>